<keyword id="KW-0963">Cytoplasm</keyword>
<keyword id="KW-0369">Histidine metabolism</keyword>
<keyword id="KW-0456">Lyase</keyword>
<keyword id="KW-0520">NAD</keyword>
<organism>
    <name type="scientific">Shewanella halifaxensis (strain HAW-EB4)</name>
    <dbReference type="NCBI Taxonomy" id="458817"/>
    <lineage>
        <taxon>Bacteria</taxon>
        <taxon>Pseudomonadati</taxon>
        <taxon>Pseudomonadota</taxon>
        <taxon>Gammaproteobacteria</taxon>
        <taxon>Alteromonadales</taxon>
        <taxon>Shewanellaceae</taxon>
        <taxon>Shewanella</taxon>
    </lineage>
</organism>
<name>HUTU_SHEHH</name>
<gene>
    <name evidence="1" type="primary">hutU</name>
    <name type="ordered locus">Shal_0073</name>
</gene>
<reference key="1">
    <citation type="submission" date="2008-01" db="EMBL/GenBank/DDBJ databases">
        <title>Complete sequence of Shewanella halifaxensis HAW-EB4.</title>
        <authorList>
            <consortium name="US DOE Joint Genome Institute"/>
            <person name="Copeland A."/>
            <person name="Lucas S."/>
            <person name="Lapidus A."/>
            <person name="Glavina del Rio T."/>
            <person name="Dalin E."/>
            <person name="Tice H."/>
            <person name="Bruce D."/>
            <person name="Goodwin L."/>
            <person name="Pitluck S."/>
            <person name="Sims D."/>
            <person name="Brettin T."/>
            <person name="Detter J.C."/>
            <person name="Han C."/>
            <person name="Kuske C.R."/>
            <person name="Schmutz J."/>
            <person name="Larimer F."/>
            <person name="Land M."/>
            <person name="Hauser L."/>
            <person name="Kyrpides N."/>
            <person name="Kim E."/>
            <person name="Zhao J.-S."/>
            <person name="Richardson P."/>
        </authorList>
    </citation>
    <scope>NUCLEOTIDE SEQUENCE [LARGE SCALE GENOMIC DNA]</scope>
    <source>
        <strain>HAW-EB4</strain>
    </source>
</reference>
<dbReference type="EC" id="4.2.1.49" evidence="1"/>
<dbReference type="EMBL" id="CP000931">
    <property type="protein sequence ID" value="ABZ74649.1"/>
    <property type="molecule type" value="Genomic_DNA"/>
</dbReference>
<dbReference type="RefSeq" id="WP_012275206.1">
    <property type="nucleotide sequence ID" value="NC_010334.1"/>
</dbReference>
<dbReference type="SMR" id="B0TM56"/>
<dbReference type="STRING" id="458817.Shal_0073"/>
<dbReference type="KEGG" id="shl:Shal_0073"/>
<dbReference type="eggNOG" id="COG2987">
    <property type="taxonomic scope" value="Bacteria"/>
</dbReference>
<dbReference type="HOGENOM" id="CLU_018868_0_1_6"/>
<dbReference type="OrthoDB" id="9764874at2"/>
<dbReference type="UniPathway" id="UPA00379">
    <property type="reaction ID" value="UER00550"/>
</dbReference>
<dbReference type="Proteomes" id="UP000001317">
    <property type="component" value="Chromosome"/>
</dbReference>
<dbReference type="GO" id="GO:0005737">
    <property type="term" value="C:cytoplasm"/>
    <property type="evidence" value="ECO:0007669"/>
    <property type="project" value="UniProtKB-SubCell"/>
</dbReference>
<dbReference type="GO" id="GO:0016153">
    <property type="term" value="F:urocanate hydratase activity"/>
    <property type="evidence" value="ECO:0007669"/>
    <property type="project" value="UniProtKB-UniRule"/>
</dbReference>
<dbReference type="GO" id="GO:0019556">
    <property type="term" value="P:L-histidine catabolic process to glutamate and formamide"/>
    <property type="evidence" value="ECO:0007669"/>
    <property type="project" value="UniProtKB-UniPathway"/>
</dbReference>
<dbReference type="GO" id="GO:0019557">
    <property type="term" value="P:L-histidine catabolic process to glutamate and formate"/>
    <property type="evidence" value="ECO:0007669"/>
    <property type="project" value="UniProtKB-UniPathway"/>
</dbReference>
<dbReference type="FunFam" id="3.40.50.10730:FF:000001">
    <property type="entry name" value="Urocanate hydratase"/>
    <property type="match status" value="1"/>
</dbReference>
<dbReference type="Gene3D" id="3.40.50.10730">
    <property type="entry name" value="Urocanase like domains"/>
    <property type="match status" value="1"/>
</dbReference>
<dbReference type="Gene3D" id="3.40.1770.10">
    <property type="entry name" value="Urocanase superfamily"/>
    <property type="match status" value="1"/>
</dbReference>
<dbReference type="HAMAP" id="MF_00577">
    <property type="entry name" value="HutU"/>
    <property type="match status" value="1"/>
</dbReference>
<dbReference type="InterPro" id="IPR055351">
    <property type="entry name" value="Urocanase"/>
</dbReference>
<dbReference type="InterPro" id="IPR023637">
    <property type="entry name" value="Urocanase-like"/>
</dbReference>
<dbReference type="InterPro" id="IPR035401">
    <property type="entry name" value="Urocanase_C"/>
</dbReference>
<dbReference type="InterPro" id="IPR038364">
    <property type="entry name" value="Urocanase_central_sf"/>
</dbReference>
<dbReference type="InterPro" id="IPR023636">
    <property type="entry name" value="Urocanase_CS"/>
</dbReference>
<dbReference type="InterPro" id="IPR035400">
    <property type="entry name" value="Urocanase_N"/>
</dbReference>
<dbReference type="InterPro" id="IPR035085">
    <property type="entry name" value="Urocanase_Rossmann-like"/>
</dbReference>
<dbReference type="InterPro" id="IPR036190">
    <property type="entry name" value="Urocanase_sf"/>
</dbReference>
<dbReference type="NCBIfam" id="TIGR01228">
    <property type="entry name" value="hutU"/>
    <property type="match status" value="1"/>
</dbReference>
<dbReference type="NCBIfam" id="NF003820">
    <property type="entry name" value="PRK05414.1"/>
    <property type="match status" value="1"/>
</dbReference>
<dbReference type="PANTHER" id="PTHR12216">
    <property type="entry name" value="UROCANATE HYDRATASE"/>
    <property type="match status" value="1"/>
</dbReference>
<dbReference type="PANTHER" id="PTHR12216:SF4">
    <property type="entry name" value="UROCANATE HYDRATASE"/>
    <property type="match status" value="1"/>
</dbReference>
<dbReference type="Pfam" id="PF01175">
    <property type="entry name" value="Urocanase"/>
    <property type="match status" value="1"/>
</dbReference>
<dbReference type="Pfam" id="PF17392">
    <property type="entry name" value="Urocanase_C"/>
    <property type="match status" value="1"/>
</dbReference>
<dbReference type="Pfam" id="PF17391">
    <property type="entry name" value="Urocanase_N"/>
    <property type="match status" value="1"/>
</dbReference>
<dbReference type="PIRSF" id="PIRSF001423">
    <property type="entry name" value="Urocanate_hydrat"/>
    <property type="match status" value="1"/>
</dbReference>
<dbReference type="SUPFAM" id="SSF111326">
    <property type="entry name" value="Urocanase"/>
    <property type="match status" value="1"/>
</dbReference>
<dbReference type="PROSITE" id="PS01233">
    <property type="entry name" value="UROCANASE"/>
    <property type="match status" value="1"/>
</dbReference>
<comment type="function">
    <text evidence="1">Catalyzes the conversion of urocanate to 4-imidazolone-5-propionate.</text>
</comment>
<comment type="catalytic activity">
    <reaction evidence="1">
        <text>4-imidazolone-5-propanoate = trans-urocanate + H2O</text>
        <dbReference type="Rhea" id="RHEA:13101"/>
        <dbReference type="ChEBI" id="CHEBI:15377"/>
        <dbReference type="ChEBI" id="CHEBI:17771"/>
        <dbReference type="ChEBI" id="CHEBI:77893"/>
        <dbReference type="EC" id="4.2.1.49"/>
    </reaction>
</comment>
<comment type="cofactor">
    <cofactor evidence="1">
        <name>NAD(+)</name>
        <dbReference type="ChEBI" id="CHEBI:57540"/>
    </cofactor>
    <text evidence="1">Binds 1 NAD(+) per subunit.</text>
</comment>
<comment type="pathway">
    <text evidence="1">Amino-acid degradation; L-histidine degradation into L-glutamate; N-formimidoyl-L-glutamate from L-histidine: step 2/3.</text>
</comment>
<comment type="subcellular location">
    <subcellularLocation>
        <location evidence="1">Cytoplasm</location>
    </subcellularLocation>
</comment>
<comment type="similarity">
    <text evidence="1">Belongs to the urocanase family.</text>
</comment>
<evidence type="ECO:0000255" key="1">
    <source>
        <dbReference type="HAMAP-Rule" id="MF_00577"/>
    </source>
</evidence>
<proteinExistence type="inferred from homology"/>
<sequence length="554" mass="60276">MDKRHDPSRRIIAPTGTKLSCKSWLTEAPMRMLMNNLHPDVAERPEDLVVYGGIGRAARDWECYDKIVEVLQRLEDDETLMVQSGKPVGVFKTHSNAPRVIIANSNLVPHWANWEHFNELDKKGLAMYGQMTAGSWIYIGSQGIVQGTYETFVAMAKQHFNGVSAGKWILTGGLGGMGGAQPLAGTMAGYSVLTCEVDETRIDFRLRTKYVDKKATSLDEALAMIEEANNSGKPVSVGLLANAADVFAELVERGITPDVVTDQTSAHDPLNGYLPQGWTLEYAAEMRKKDEAAVVKAAKQSMAVQVKAMLALQAAGAATTDYGNNIRQMAFEEGVENAFDFPGFVPAYVRPLFCEGIGPFRWVALSGDPEDIYKTDAKVKELIPDNPQLHNWLDMARERIAFQGLPSRICWVGLKDRARLALAFNEMVKNGELSAPIVIGRDHLDSGSVASPNRETESMLDGSDAVSDWPLMNALLNTASGATWVSLHHGGGVGMGFSQHSGVVIVADGTDDAAVRLGRVLWNDPATGVMRHADAGYDIAKNCAKEQGLDLPML</sequence>
<accession>B0TM56</accession>
<feature type="chain" id="PRO_1000082355" description="Urocanate hydratase">
    <location>
        <begin position="1"/>
        <end position="554"/>
    </location>
</feature>
<feature type="active site" evidence="1">
    <location>
        <position position="410"/>
    </location>
</feature>
<feature type="binding site" evidence="1">
    <location>
        <begin position="52"/>
        <end position="53"/>
    </location>
    <ligand>
        <name>NAD(+)</name>
        <dbReference type="ChEBI" id="CHEBI:57540"/>
    </ligand>
</feature>
<feature type="binding site" evidence="1">
    <location>
        <position position="130"/>
    </location>
    <ligand>
        <name>NAD(+)</name>
        <dbReference type="ChEBI" id="CHEBI:57540"/>
    </ligand>
</feature>
<feature type="binding site" evidence="1">
    <location>
        <begin position="176"/>
        <end position="178"/>
    </location>
    <ligand>
        <name>NAD(+)</name>
        <dbReference type="ChEBI" id="CHEBI:57540"/>
    </ligand>
</feature>
<feature type="binding site" evidence="1">
    <location>
        <position position="196"/>
    </location>
    <ligand>
        <name>NAD(+)</name>
        <dbReference type="ChEBI" id="CHEBI:57540"/>
    </ligand>
</feature>
<feature type="binding site" evidence="1">
    <location>
        <position position="201"/>
    </location>
    <ligand>
        <name>NAD(+)</name>
        <dbReference type="ChEBI" id="CHEBI:57540"/>
    </ligand>
</feature>
<feature type="binding site" evidence="1">
    <location>
        <begin position="242"/>
        <end position="243"/>
    </location>
    <ligand>
        <name>NAD(+)</name>
        <dbReference type="ChEBI" id="CHEBI:57540"/>
    </ligand>
</feature>
<feature type="binding site" evidence="1">
    <location>
        <begin position="263"/>
        <end position="267"/>
    </location>
    <ligand>
        <name>NAD(+)</name>
        <dbReference type="ChEBI" id="CHEBI:57540"/>
    </ligand>
</feature>
<feature type="binding site" evidence="1">
    <location>
        <begin position="273"/>
        <end position="274"/>
    </location>
    <ligand>
        <name>NAD(+)</name>
        <dbReference type="ChEBI" id="CHEBI:57540"/>
    </ligand>
</feature>
<feature type="binding site" evidence="1">
    <location>
        <position position="322"/>
    </location>
    <ligand>
        <name>NAD(+)</name>
        <dbReference type="ChEBI" id="CHEBI:57540"/>
    </ligand>
</feature>
<feature type="binding site" evidence="1">
    <location>
        <position position="492"/>
    </location>
    <ligand>
        <name>NAD(+)</name>
        <dbReference type="ChEBI" id="CHEBI:57540"/>
    </ligand>
</feature>
<protein>
    <recommendedName>
        <fullName evidence="1">Urocanate hydratase</fullName>
        <shortName evidence="1">Urocanase</shortName>
        <ecNumber evidence="1">4.2.1.49</ecNumber>
    </recommendedName>
    <alternativeName>
        <fullName evidence="1">Imidazolonepropionate hydrolase</fullName>
    </alternativeName>
</protein>